<keyword id="KW-0004">4Fe-4S</keyword>
<keyword id="KW-0148">Chlorophyll</keyword>
<keyword id="KW-0150">Chloroplast</keyword>
<keyword id="KW-0157">Chromophore</keyword>
<keyword id="KW-0249">Electron transport</keyword>
<keyword id="KW-0408">Iron</keyword>
<keyword id="KW-0411">Iron-sulfur</keyword>
<keyword id="KW-0460">Magnesium</keyword>
<keyword id="KW-0472">Membrane</keyword>
<keyword id="KW-0479">Metal-binding</keyword>
<keyword id="KW-0560">Oxidoreductase</keyword>
<keyword id="KW-0602">Photosynthesis</keyword>
<keyword id="KW-0603">Photosystem I</keyword>
<keyword id="KW-0934">Plastid</keyword>
<keyword id="KW-1185">Reference proteome</keyword>
<keyword id="KW-0793">Thylakoid</keyword>
<keyword id="KW-0812">Transmembrane</keyword>
<keyword id="KW-1133">Transmembrane helix</keyword>
<keyword id="KW-0813">Transport</keyword>
<proteinExistence type="inferred from homology"/>
<reference key="1">
    <citation type="journal article" date="2007" name="Plant Biotechnol. J.">
        <title>The complete nucleotide sequence of the coffee (Coffea arabica L.) chloroplast genome: organization and implications for biotechnology and phylogenetic relationships amongst angiosperms.</title>
        <authorList>
            <person name="Samson N."/>
            <person name="Bausher M.G."/>
            <person name="Lee S.-B."/>
            <person name="Jansen R.K."/>
            <person name="Daniell H."/>
        </authorList>
    </citation>
    <scope>NUCLEOTIDE SEQUENCE [LARGE SCALE GENOMIC DNA]</scope>
</reference>
<gene>
    <name evidence="1" type="primary">psaB</name>
</gene>
<sequence>MALRFPRFSQGLAQDPTTRRIWFGIATAHDFESHDDITEERLYQNIFASHFGQLAIIFLWTSGNLFHVAWQGNFESWVQDPLHVRPIAHAIWDPHFGQPAVEAFTRGGALGPVNIAYSGVYQWWYTIGLRTNEDLYTGALFLLFISAIFLIAGWLHLQPKWKPSVSWFKNAESRLNHHLSGLFGVSSLAWTGHLVHVAIPGSRGEYVRWNNFLDVLPHPQGLGPLFTGQWNLYAQNPDSGSHLFGTSQGAGTAILTLLGGFHPQTQSLWLTDIAHHHLAIAFIFLVAGHMYRTNFGIGHSMKDLLDAHIPPGGRLGRGHKGLYDTINNSLHFQLGLALASLGVITSLVAQHMYSLPAYAFIAQDFTTQAALYTHHQYIAGFIMTGAFAHGAIFFIRDYNPEQNEDNVLARMLDHKEAIISHLSWASLFLGFHTLGLYVHNDVMLAFGTPEKQILIEPIFAQWIQSAHGKTSYGFDVLLSSTSGPAFNAGRSIWLPGWLNAVNENSNSLFLTIGPGDFLVHHAIALGLHTTTLILVKGALDARGSKLMPDKKDFGYSFPCDGPGRGGTCDISAWDAFYLAVFWMLNTIGWVTFYWHWKHITLWQGNVSQFNESSTYLMGWLRDYLWLNSSQLINGYNPFGMNSLSVWAWMFLFGHLVWAIGFMFLISWRGYWQELIETLAWAHERTPLANLIRWRDKPVALSIVQARLVGLAHFSVGYIFTYAAFLIASTSGKFG</sequence>
<geneLocation type="chloroplast"/>
<organism>
    <name type="scientific">Coffea arabica</name>
    <name type="common">Arabian coffee</name>
    <dbReference type="NCBI Taxonomy" id="13443"/>
    <lineage>
        <taxon>Eukaryota</taxon>
        <taxon>Viridiplantae</taxon>
        <taxon>Streptophyta</taxon>
        <taxon>Embryophyta</taxon>
        <taxon>Tracheophyta</taxon>
        <taxon>Spermatophyta</taxon>
        <taxon>Magnoliopsida</taxon>
        <taxon>eudicotyledons</taxon>
        <taxon>Gunneridae</taxon>
        <taxon>Pentapetalae</taxon>
        <taxon>asterids</taxon>
        <taxon>lamiids</taxon>
        <taxon>Gentianales</taxon>
        <taxon>Rubiaceae</taxon>
        <taxon>Ixoroideae</taxon>
        <taxon>Gardenieae complex</taxon>
        <taxon>Bertiereae - Coffeeae clade</taxon>
        <taxon>Coffeeae</taxon>
        <taxon>Coffea</taxon>
    </lineage>
</organism>
<comment type="function">
    <text evidence="1">PsaA and PsaB bind P700, the primary electron donor of photosystem I (PSI), as well as the electron acceptors A0, A1 and FX. PSI is a plastocyanin-ferredoxin oxidoreductase, converting photonic excitation into a charge separation, which transfers an electron from the donor P700 chlorophyll pair to the spectroscopically characterized acceptors A0, A1, FX, FA and FB in turn. Oxidized P700 is reduced on the lumenal side of the thylakoid membrane by plastocyanin.</text>
</comment>
<comment type="catalytic activity">
    <reaction evidence="1">
        <text>reduced [plastocyanin] + hnu + oxidized [2Fe-2S]-[ferredoxin] = oxidized [plastocyanin] + reduced [2Fe-2S]-[ferredoxin]</text>
        <dbReference type="Rhea" id="RHEA:30407"/>
        <dbReference type="Rhea" id="RHEA-COMP:10000"/>
        <dbReference type="Rhea" id="RHEA-COMP:10001"/>
        <dbReference type="Rhea" id="RHEA-COMP:10039"/>
        <dbReference type="Rhea" id="RHEA-COMP:10040"/>
        <dbReference type="ChEBI" id="CHEBI:29036"/>
        <dbReference type="ChEBI" id="CHEBI:30212"/>
        <dbReference type="ChEBI" id="CHEBI:33737"/>
        <dbReference type="ChEBI" id="CHEBI:33738"/>
        <dbReference type="ChEBI" id="CHEBI:49552"/>
        <dbReference type="EC" id="1.97.1.12"/>
    </reaction>
</comment>
<comment type="cofactor">
    <text evidence="1">P700 is a chlorophyll a/chlorophyll a' dimer, A0 is one or more chlorophyll a, A1 is one or both phylloquinones and FX is a shared 4Fe-4S iron-sulfur center.</text>
</comment>
<comment type="subunit">
    <text evidence="1">The PsaA/B heterodimer binds the P700 chlorophyll special pair and subsequent electron acceptors. PSI consists of a core antenna complex that captures photons, and an electron transfer chain that converts photonic excitation into a charge separation. The eukaryotic PSI reaction center is composed of at least 11 subunits.</text>
</comment>
<comment type="subcellular location">
    <subcellularLocation>
        <location>Plastid</location>
        <location>Chloroplast thylakoid membrane</location>
        <topology>Multi-pass membrane protein</topology>
    </subcellularLocation>
</comment>
<comment type="similarity">
    <text evidence="1">Belongs to the PsaA/PsaB family.</text>
</comment>
<name>PSAB_COFAR</name>
<protein>
    <recommendedName>
        <fullName evidence="1">Photosystem I P700 chlorophyll a apoprotein A2</fullName>
        <ecNumber evidence="1">1.97.1.12</ecNumber>
    </recommendedName>
    <alternativeName>
        <fullName evidence="1">PSI-B</fullName>
    </alternativeName>
    <alternativeName>
        <fullName evidence="1">PsaB</fullName>
    </alternativeName>
</protein>
<evidence type="ECO:0000255" key="1">
    <source>
        <dbReference type="HAMAP-Rule" id="MF_00482"/>
    </source>
</evidence>
<feature type="chain" id="PRO_0000277109" description="Photosystem I P700 chlorophyll a apoprotein A2">
    <location>
        <begin position="1"/>
        <end position="734"/>
    </location>
</feature>
<feature type="transmembrane region" description="Helical; Name=I" evidence="1">
    <location>
        <begin position="46"/>
        <end position="69"/>
    </location>
</feature>
<feature type="transmembrane region" description="Helical; Name=II" evidence="1">
    <location>
        <begin position="135"/>
        <end position="158"/>
    </location>
</feature>
<feature type="transmembrane region" description="Helical; Name=III" evidence="1">
    <location>
        <begin position="175"/>
        <end position="199"/>
    </location>
</feature>
<feature type="transmembrane region" description="Helical; Name=IV" evidence="1">
    <location>
        <begin position="273"/>
        <end position="291"/>
    </location>
</feature>
<feature type="transmembrane region" description="Helical; Name=V" evidence="1">
    <location>
        <begin position="330"/>
        <end position="353"/>
    </location>
</feature>
<feature type="transmembrane region" description="Helical; Name=VI" evidence="1">
    <location>
        <begin position="369"/>
        <end position="395"/>
    </location>
</feature>
<feature type="transmembrane region" description="Helical; Name=VII" evidence="1">
    <location>
        <begin position="417"/>
        <end position="439"/>
    </location>
</feature>
<feature type="transmembrane region" description="Helical; Name=VIII" evidence="1">
    <location>
        <begin position="517"/>
        <end position="535"/>
    </location>
</feature>
<feature type="transmembrane region" description="Helical; Name=IX" evidence="1">
    <location>
        <begin position="575"/>
        <end position="596"/>
    </location>
</feature>
<feature type="transmembrane region" description="Helical; Name=X" evidence="1">
    <location>
        <begin position="643"/>
        <end position="665"/>
    </location>
</feature>
<feature type="transmembrane region" description="Helical; Name=XI" evidence="1">
    <location>
        <begin position="707"/>
        <end position="727"/>
    </location>
</feature>
<feature type="binding site" evidence="1">
    <location>
        <position position="559"/>
    </location>
    <ligand>
        <name>[4Fe-4S] cluster</name>
        <dbReference type="ChEBI" id="CHEBI:49883"/>
        <note>ligand shared between dimeric partners</note>
    </ligand>
</feature>
<feature type="binding site" evidence="1">
    <location>
        <position position="568"/>
    </location>
    <ligand>
        <name>[4Fe-4S] cluster</name>
        <dbReference type="ChEBI" id="CHEBI:49883"/>
        <note>ligand shared between dimeric partners</note>
    </ligand>
</feature>
<feature type="binding site" description="axial binding residue" evidence="1">
    <location>
        <position position="654"/>
    </location>
    <ligand>
        <name>chlorophyll a</name>
        <dbReference type="ChEBI" id="CHEBI:58416"/>
        <label>B1</label>
    </ligand>
    <ligandPart>
        <name>Mg</name>
        <dbReference type="ChEBI" id="CHEBI:25107"/>
    </ligandPart>
</feature>
<feature type="binding site" description="axial binding residue" evidence="1">
    <location>
        <position position="662"/>
    </location>
    <ligand>
        <name>chlorophyll a</name>
        <dbReference type="ChEBI" id="CHEBI:58416"/>
        <label>B3</label>
    </ligand>
    <ligandPart>
        <name>Mg</name>
        <dbReference type="ChEBI" id="CHEBI:25107"/>
    </ligandPart>
</feature>
<feature type="binding site" evidence="1">
    <location>
        <position position="670"/>
    </location>
    <ligand>
        <name>chlorophyll a</name>
        <dbReference type="ChEBI" id="CHEBI:58416"/>
        <label>B3</label>
    </ligand>
</feature>
<feature type="binding site" evidence="1">
    <location>
        <position position="671"/>
    </location>
    <ligand>
        <name>phylloquinone</name>
        <dbReference type="ChEBI" id="CHEBI:18067"/>
        <label>B</label>
    </ligand>
</feature>
<accession>A0A334</accession>
<dbReference type="EC" id="1.97.1.12" evidence="1"/>
<dbReference type="EMBL" id="EF044213">
    <property type="protein sequence ID" value="ABJ89678.1"/>
    <property type="molecule type" value="Genomic_DNA"/>
</dbReference>
<dbReference type="RefSeq" id="YP_817481.1">
    <property type="nucleotide sequence ID" value="NC_008535.1"/>
</dbReference>
<dbReference type="SMR" id="A0A334"/>
<dbReference type="GeneID" id="4421875"/>
<dbReference type="OrthoDB" id="349at2759"/>
<dbReference type="Proteomes" id="UP000515148">
    <property type="component" value="Chloroplast Pltd"/>
</dbReference>
<dbReference type="GO" id="GO:0009535">
    <property type="term" value="C:chloroplast thylakoid membrane"/>
    <property type="evidence" value="ECO:0007669"/>
    <property type="project" value="UniProtKB-SubCell"/>
</dbReference>
<dbReference type="GO" id="GO:0009522">
    <property type="term" value="C:photosystem I"/>
    <property type="evidence" value="ECO:0007669"/>
    <property type="project" value="UniProtKB-KW"/>
</dbReference>
<dbReference type="GO" id="GO:0051539">
    <property type="term" value="F:4 iron, 4 sulfur cluster binding"/>
    <property type="evidence" value="ECO:0007669"/>
    <property type="project" value="UniProtKB-KW"/>
</dbReference>
<dbReference type="GO" id="GO:0016168">
    <property type="term" value="F:chlorophyll binding"/>
    <property type="evidence" value="ECO:0007669"/>
    <property type="project" value="UniProtKB-KW"/>
</dbReference>
<dbReference type="GO" id="GO:0009055">
    <property type="term" value="F:electron transfer activity"/>
    <property type="evidence" value="ECO:0007669"/>
    <property type="project" value="UniProtKB-UniRule"/>
</dbReference>
<dbReference type="GO" id="GO:0000287">
    <property type="term" value="F:magnesium ion binding"/>
    <property type="evidence" value="ECO:0007669"/>
    <property type="project" value="UniProtKB-UniRule"/>
</dbReference>
<dbReference type="GO" id="GO:0016491">
    <property type="term" value="F:oxidoreductase activity"/>
    <property type="evidence" value="ECO:0007669"/>
    <property type="project" value="UniProtKB-KW"/>
</dbReference>
<dbReference type="GO" id="GO:0015979">
    <property type="term" value="P:photosynthesis"/>
    <property type="evidence" value="ECO:0007669"/>
    <property type="project" value="UniProtKB-UniRule"/>
</dbReference>
<dbReference type="FunFam" id="1.20.1130.10:FF:000001">
    <property type="entry name" value="Photosystem I P700 chlorophyll a apoprotein A2"/>
    <property type="match status" value="1"/>
</dbReference>
<dbReference type="Gene3D" id="1.20.1130.10">
    <property type="entry name" value="Photosystem I PsaA/PsaB"/>
    <property type="match status" value="1"/>
</dbReference>
<dbReference type="HAMAP" id="MF_00482">
    <property type="entry name" value="PSI_PsaB"/>
    <property type="match status" value="1"/>
</dbReference>
<dbReference type="InterPro" id="IPR001280">
    <property type="entry name" value="PSI_PsaA/B"/>
</dbReference>
<dbReference type="InterPro" id="IPR020586">
    <property type="entry name" value="PSI_PsaA/B_CS"/>
</dbReference>
<dbReference type="InterPro" id="IPR036408">
    <property type="entry name" value="PSI_PsaA/B_sf"/>
</dbReference>
<dbReference type="InterPro" id="IPR006244">
    <property type="entry name" value="PSI_PsaB"/>
</dbReference>
<dbReference type="NCBIfam" id="TIGR01336">
    <property type="entry name" value="psaB"/>
    <property type="match status" value="1"/>
</dbReference>
<dbReference type="PANTHER" id="PTHR30128">
    <property type="entry name" value="OUTER MEMBRANE PROTEIN, OMPA-RELATED"/>
    <property type="match status" value="1"/>
</dbReference>
<dbReference type="PANTHER" id="PTHR30128:SF19">
    <property type="entry name" value="PHOTOSYSTEM I P700 CHLOROPHYLL A APOPROTEIN A1-RELATED"/>
    <property type="match status" value="1"/>
</dbReference>
<dbReference type="Pfam" id="PF00223">
    <property type="entry name" value="PsaA_PsaB"/>
    <property type="match status" value="1"/>
</dbReference>
<dbReference type="PIRSF" id="PIRSF002905">
    <property type="entry name" value="PSI_A"/>
    <property type="match status" value="1"/>
</dbReference>
<dbReference type="PRINTS" id="PR00257">
    <property type="entry name" value="PHOTSYSPSAAB"/>
</dbReference>
<dbReference type="SUPFAM" id="SSF81558">
    <property type="entry name" value="Photosystem I subunits PsaA/PsaB"/>
    <property type="match status" value="1"/>
</dbReference>
<dbReference type="PROSITE" id="PS00419">
    <property type="entry name" value="PHOTOSYSTEM_I_PSAAB"/>
    <property type="match status" value="1"/>
</dbReference>